<sequence>MPLTPPPNYTGLYIAAALGVSLAAVVALFTRSTLPIVGDSQHNLPHGGRYRDGTKAIDYFKPTKLNSVEPGNYWYTQPWLLVILLVALICLSGRHAQCCPRCNRVHSA</sequence>
<proteinExistence type="inferred from homology"/>
<dbReference type="EMBL" id="D00461">
    <property type="protein sequence ID" value="BAA00352.1"/>
    <property type="molecule type" value="Genomic_RNA"/>
</dbReference>
<dbReference type="PIR" id="JA0125">
    <property type="entry name" value="JA0125"/>
</dbReference>
<dbReference type="GO" id="GO:0044167">
    <property type="term" value="C:host cell endoplasmic reticulum membrane"/>
    <property type="evidence" value="ECO:0007669"/>
    <property type="project" value="UniProtKB-SubCell"/>
</dbReference>
<dbReference type="GO" id="GO:0016020">
    <property type="term" value="C:membrane"/>
    <property type="evidence" value="ECO:0007669"/>
    <property type="project" value="UniProtKB-KW"/>
</dbReference>
<dbReference type="GO" id="GO:0046740">
    <property type="term" value="P:transport of virus in host, cell to cell"/>
    <property type="evidence" value="ECO:0007669"/>
    <property type="project" value="UniProtKB-KW"/>
</dbReference>
<dbReference type="InterPro" id="IPR001896">
    <property type="entry name" value="Plant_vir_prot"/>
</dbReference>
<dbReference type="Pfam" id="PF01307">
    <property type="entry name" value="Plant_vir_prot"/>
    <property type="match status" value="1"/>
</dbReference>
<organismHost>
    <name type="scientific">Solanum tuberosum</name>
    <name type="common">Potato</name>
    <dbReference type="NCBI Taxonomy" id="4113"/>
</organismHost>
<reference key="1">
    <citation type="journal article" date="1989" name="J. Gen. Virol.">
        <title>Organization and interviral homologies of the 3'-terminal portion of potato virus S RNA.</title>
        <authorList>
            <person name="Mackenzie D.J."/>
            <person name="Tremaine J.H."/>
            <person name="Stace-Smith R."/>
        </authorList>
    </citation>
    <scope>NUCLEOTIDE SEQUENCE [GENOMIC RNA]</scope>
</reference>
<accession>P16651</accession>
<protein>
    <recommendedName>
        <fullName>Movement protein TGB2</fullName>
    </recommendedName>
    <alternativeName>
        <fullName>12 kDa protein</fullName>
    </alternativeName>
    <alternativeName>
        <fullName>Triple gene block 2 protein</fullName>
        <shortName>TGBp2</shortName>
    </alternativeName>
</protein>
<name>TGB2_PVSP</name>
<gene>
    <name type="ORF">ORF3</name>
</gene>
<feature type="chain" id="PRO_0000222598" description="Movement protein TGB2">
    <location>
        <begin position="1"/>
        <end position="108"/>
    </location>
</feature>
<feature type="topological domain" description="Cytoplasmic" evidence="1">
    <location>
        <begin position="1"/>
        <end position="8"/>
    </location>
</feature>
<feature type="transmembrane region" description="Helical" evidence="2">
    <location>
        <begin position="9"/>
        <end position="29"/>
    </location>
</feature>
<feature type="topological domain" description="Lumenal" evidence="1">
    <location>
        <begin position="30"/>
        <end position="72"/>
    </location>
</feature>
<feature type="transmembrane region" description="Helical" evidence="2">
    <location>
        <begin position="73"/>
        <end position="93"/>
    </location>
</feature>
<feature type="topological domain" description="Cytoplasmic" evidence="1">
    <location>
        <begin position="94"/>
        <end position="108"/>
    </location>
</feature>
<organism>
    <name type="scientific">Potato virus S (strain Peruvian)</name>
    <dbReference type="NCBI Taxonomy" id="12170"/>
    <lineage>
        <taxon>Viruses</taxon>
        <taxon>Riboviria</taxon>
        <taxon>Orthornavirae</taxon>
        <taxon>Kitrinoviricota</taxon>
        <taxon>Alsuviricetes</taxon>
        <taxon>Tymovirales</taxon>
        <taxon>Betaflexiviridae</taxon>
        <taxon>Quinvirinae</taxon>
        <taxon>Carlavirus</taxon>
        <taxon>Potato virus S</taxon>
    </lineage>
</organism>
<evidence type="ECO:0000250" key="1"/>
<evidence type="ECO:0000255" key="2"/>
<evidence type="ECO:0000305" key="3"/>
<comment type="function">
    <text evidence="1">Plays a role in viral cell-to-cell propagation, by facilitating genome transport to neighboring plant cells through plasmosdesmata,.</text>
</comment>
<comment type="subcellular location">
    <subcellularLocation>
        <location evidence="1">Host endoplasmic reticulum membrane</location>
    </subcellularLocation>
</comment>
<comment type="miscellaneous">
    <text>TGBp1, TGBp2 and TGBp3 seem to act together for cell-to-cell propagation. TGBp1 is the main movement protein that physically cross the plasmodesma with the viral genome. TGBp2 and TGBp3 would facilitate TGBp1 function.</text>
</comment>
<comment type="similarity">
    <text evidence="3">Belongs to the Tymovirales TGBp2 protein family.</text>
</comment>
<keyword id="KW-1038">Host endoplasmic reticulum</keyword>
<keyword id="KW-1043">Host membrane</keyword>
<keyword id="KW-0472">Membrane</keyword>
<keyword id="KW-0812">Transmembrane</keyword>
<keyword id="KW-1133">Transmembrane helix</keyword>
<keyword id="KW-0813">Transport</keyword>
<keyword id="KW-0916">Viral movement protein</keyword>